<name>SYC_ECO5E</name>
<reference key="1">
    <citation type="journal article" date="2011" name="Proc. Natl. Acad. Sci. U.S.A.">
        <title>Genomic anatomy of Escherichia coli O157:H7 outbreaks.</title>
        <authorList>
            <person name="Eppinger M."/>
            <person name="Mammel M.K."/>
            <person name="Leclerc J.E."/>
            <person name="Ravel J."/>
            <person name="Cebula T.A."/>
        </authorList>
    </citation>
    <scope>NUCLEOTIDE SEQUENCE [LARGE SCALE GENOMIC DNA]</scope>
    <source>
        <strain>EC4115 / EHEC</strain>
    </source>
</reference>
<protein>
    <recommendedName>
        <fullName evidence="1">Cysteine--tRNA ligase</fullName>
        <ecNumber evidence="1">6.1.1.16</ecNumber>
    </recommendedName>
    <alternativeName>
        <fullName evidence="1">Cysteinyl-tRNA synthetase</fullName>
        <shortName evidence="1">CysRS</shortName>
    </alternativeName>
</protein>
<keyword id="KW-0030">Aminoacyl-tRNA synthetase</keyword>
<keyword id="KW-0067">ATP-binding</keyword>
<keyword id="KW-0963">Cytoplasm</keyword>
<keyword id="KW-0436">Ligase</keyword>
<keyword id="KW-0479">Metal-binding</keyword>
<keyword id="KW-0547">Nucleotide-binding</keyword>
<keyword id="KW-0648">Protein biosynthesis</keyword>
<keyword id="KW-0862">Zinc</keyword>
<sequence>MLKIFNTLTRQKEEFKPIHAGEVGMYVCGITVYDLCHIGHGRTFVAFDVVARYLRFLGYKLKYVRNITDIDDKIIKRANENGESFVALVDRMIAEMHKDFDALNILRPDMEPRATHHIAEIIELTEQLIAKGHAYVADNGDVMFDVPTDPTYGVLSRQDLDQLQAGARVDVVDDKRNPMDFVLWKMSKEGEPSWPSPWGAGRPGWHIECSAMNCKQLGNHFDIHGGGSDLMFPHHENEIAQSTCAHDGQYVNYWMHSGMVMVDREKMSKSLGNFFTVRDVLKYYDAETVRYFLMSGHYRSQLNYSEENLKQARAALERLYTALRGTDKTVAPAGGEAFEARFIEAMDDDFNTPEAYSVLFDMAREVNRLKVEDMAAANAMASHLRKLSAVLGLLEQEPEAFLQSGAQADDSEVAEIEALIQQRLDARKAKDWAAADAARDRLNEMGIVLEDGPQGTTWRRK</sequence>
<proteinExistence type="inferred from homology"/>
<evidence type="ECO:0000255" key="1">
    <source>
        <dbReference type="HAMAP-Rule" id="MF_00041"/>
    </source>
</evidence>
<accession>B5YPP1</accession>
<dbReference type="EC" id="6.1.1.16" evidence="1"/>
<dbReference type="EMBL" id="CP001164">
    <property type="protein sequence ID" value="ACI35904.1"/>
    <property type="molecule type" value="Genomic_DNA"/>
</dbReference>
<dbReference type="RefSeq" id="WP_000912351.1">
    <property type="nucleotide sequence ID" value="NC_011353.1"/>
</dbReference>
<dbReference type="SMR" id="B5YPP1"/>
<dbReference type="KEGG" id="ecf:ECH74115_0627"/>
<dbReference type="HOGENOM" id="CLU_013528_0_1_6"/>
<dbReference type="GO" id="GO:0005829">
    <property type="term" value="C:cytosol"/>
    <property type="evidence" value="ECO:0007669"/>
    <property type="project" value="TreeGrafter"/>
</dbReference>
<dbReference type="GO" id="GO:0005524">
    <property type="term" value="F:ATP binding"/>
    <property type="evidence" value="ECO:0007669"/>
    <property type="project" value="UniProtKB-UniRule"/>
</dbReference>
<dbReference type="GO" id="GO:0004817">
    <property type="term" value="F:cysteine-tRNA ligase activity"/>
    <property type="evidence" value="ECO:0007669"/>
    <property type="project" value="UniProtKB-UniRule"/>
</dbReference>
<dbReference type="GO" id="GO:0008270">
    <property type="term" value="F:zinc ion binding"/>
    <property type="evidence" value="ECO:0007669"/>
    <property type="project" value="UniProtKB-UniRule"/>
</dbReference>
<dbReference type="GO" id="GO:0006423">
    <property type="term" value="P:cysteinyl-tRNA aminoacylation"/>
    <property type="evidence" value="ECO:0007669"/>
    <property type="project" value="UniProtKB-UniRule"/>
</dbReference>
<dbReference type="CDD" id="cd07963">
    <property type="entry name" value="Anticodon_Ia_Cys"/>
    <property type="match status" value="1"/>
</dbReference>
<dbReference type="CDD" id="cd00672">
    <property type="entry name" value="CysRS_core"/>
    <property type="match status" value="1"/>
</dbReference>
<dbReference type="FunFam" id="1.20.120.1910:FF:000001">
    <property type="entry name" value="Cysteine--tRNA ligase"/>
    <property type="match status" value="1"/>
</dbReference>
<dbReference type="FunFam" id="3.40.50.620:FF:000009">
    <property type="entry name" value="Cysteine--tRNA ligase"/>
    <property type="match status" value="1"/>
</dbReference>
<dbReference type="Gene3D" id="1.20.120.1910">
    <property type="entry name" value="Cysteine-tRNA ligase, C-terminal anti-codon recognition domain"/>
    <property type="match status" value="1"/>
</dbReference>
<dbReference type="Gene3D" id="3.40.50.620">
    <property type="entry name" value="HUPs"/>
    <property type="match status" value="1"/>
</dbReference>
<dbReference type="HAMAP" id="MF_00041">
    <property type="entry name" value="Cys_tRNA_synth"/>
    <property type="match status" value="1"/>
</dbReference>
<dbReference type="InterPro" id="IPR015803">
    <property type="entry name" value="Cys-tRNA-ligase"/>
</dbReference>
<dbReference type="InterPro" id="IPR015273">
    <property type="entry name" value="Cys-tRNA-synt_Ia_DALR"/>
</dbReference>
<dbReference type="InterPro" id="IPR024909">
    <property type="entry name" value="Cys-tRNA/MSH_ligase"/>
</dbReference>
<dbReference type="InterPro" id="IPR056411">
    <property type="entry name" value="CysS_C"/>
</dbReference>
<dbReference type="InterPro" id="IPR014729">
    <property type="entry name" value="Rossmann-like_a/b/a_fold"/>
</dbReference>
<dbReference type="InterPro" id="IPR032678">
    <property type="entry name" value="tRNA-synt_1_cat_dom"/>
</dbReference>
<dbReference type="InterPro" id="IPR009080">
    <property type="entry name" value="tRNAsynth_Ia_anticodon-bd"/>
</dbReference>
<dbReference type="NCBIfam" id="TIGR00435">
    <property type="entry name" value="cysS"/>
    <property type="match status" value="1"/>
</dbReference>
<dbReference type="PANTHER" id="PTHR10890:SF3">
    <property type="entry name" value="CYSTEINE--TRNA LIGASE, CYTOPLASMIC"/>
    <property type="match status" value="1"/>
</dbReference>
<dbReference type="PANTHER" id="PTHR10890">
    <property type="entry name" value="CYSTEINYL-TRNA SYNTHETASE"/>
    <property type="match status" value="1"/>
</dbReference>
<dbReference type="Pfam" id="PF23493">
    <property type="entry name" value="CysS_C"/>
    <property type="match status" value="1"/>
</dbReference>
<dbReference type="Pfam" id="PF09190">
    <property type="entry name" value="DALR_2"/>
    <property type="match status" value="1"/>
</dbReference>
<dbReference type="Pfam" id="PF01406">
    <property type="entry name" value="tRNA-synt_1e"/>
    <property type="match status" value="1"/>
</dbReference>
<dbReference type="PRINTS" id="PR00983">
    <property type="entry name" value="TRNASYNTHCYS"/>
</dbReference>
<dbReference type="SMART" id="SM00840">
    <property type="entry name" value="DALR_2"/>
    <property type="match status" value="1"/>
</dbReference>
<dbReference type="SUPFAM" id="SSF47323">
    <property type="entry name" value="Anticodon-binding domain of a subclass of class I aminoacyl-tRNA synthetases"/>
    <property type="match status" value="1"/>
</dbReference>
<dbReference type="SUPFAM" id="SSF52374">
    <property type="entry name" value="Nucleotidylyl transferase"/>
    <property type="match status" value="1"/>
</dbReference>
<gene>
    <name evidence="1" type="primary">cysS</name>
    <name type="ordered locus">ECH74115_0627</name>
</gene>
<organism>
    <name type="scientific">Escherichia coli O157:H7 (strain EC4115 / EHEC)</name>
    <dbReference type="NCBI Taxonomy" id="444450"/>
    <lineage>
        <taxon>Bacteria</taxon>
        <taxon>Pseudomonadati</taxon>
        <taxon>Pseudomonadota</taxon>
        <taxon>Gammaproteobacteria</taxon>
        <taxon>Enterobacterales</taxon>
        <taxon>Enterobacteriaceae</taxon>
        <taxon>Escherichia</taxon>
    </lineage>
</organism>
<comment type="catalytic activity">
    <reaction evidence="1">
        <text>tRNA(Cys) + L-cysteine + ATP = L-cysteinyl-tRNA(Cys) + AMP + diphosphate</text>
        <dbReference type="Rhea" id="RHEA:17773"/>
        <dbReference type="Rhea" id="RHEA-COMP:9661"/>
        <dbReference type="Rhea" id="RHEA-COMP:9679"/>
        <dbReference type="ChEBI" id="CHEBI:30616"/>
        <dbReference type="ChEBI" id="CHEBI:33019"/>
        <dbReference type="ChEBI" id="CHEBI:35235"/>
        <dbReference type="ChEBI" id="CHEBI:78442"/>
        <dbReference type="ChEBI" id="CHEBI:78517"/>
        <dbReference type="ChEBI" id="CHEBI:456215"/>
        <dbReference type="EC" id="6.1.1.16"/>
    </reaction>
</comment>
<comment type="cofactor">
    <cofactor evidence="1">
        <name>Zn(2+)</name>
        <dbReference type="ChEBI" id="CHEBI:29105"/>
    </cofactor>
    <text evidence="1">Binds 1 zinc ion per subunit.</text>
</comment>
<comment type="subunit">
    <text evidence="1">Monomer.</text>
</comment>
<comment type="subcellular location">
    <subcellularLocation>
        <location evidence="1">Cytoplasm</location>
    </subcellularLocation>
</comment>
<comment type="similarity">
    <text evidence="1">Belongs to the class-I aminoacyl-tRNA synthetase family.</text>
</comment>
<feature type="chain" id="PRO_1000090833" description="Cysteine--tRNA ligase">
    <location>
        <begin position="1"/>
        <end position="461"/>
    </location>
</feature>
<feature type="short sequence motif" description="'HIGH' region">
    <location>
        <begin position="30"/>
        <end position="40"/>
    </location>
</feature>
<feature type="short sequence motif" description="'KMSKS' region">
    <location>
        <begin position="266"/>
        <end position="270"/>
    </location>
</feature>
<feature type="binding site" evidence="1">
    <location>
        <position position="28"/>
    </location>
    <ligand>
        <name>Zn(2+)</name>
        <dbReference type="ChEBI" id="CHEBI:29105"/>
    </ligand>
</feature>
<feature type="binding site" evidence="1">
    <location>
        <position position="209"/>
    </location>
    <ligand>
        <name>Zn(2+)</name>
        <dbReference type="ChEBI" id="CHEBI:29105"/>
    </ligand>
</feature>
<feature type="binding site" evidence="1">
    <location>
        <position position="234"/>
    </location>
    <ligand>
        <name>Zn(2+)</name>
        <dbReference type="ChEBI" id="CHEBI:29105"/>
    </ligand>
</feature>
<feature type="binding site" evidence="1">
    <location>
        <position position="238"/>
    </location>
    <ligand>
        <name>Zn(2+)</name>
        <dbReference type="ChEBI" id="CHEBI:29105"/>
    </ligand>
</feature>
<feature type="binding site" evidence="1">
    <location>
        <position position="269"/>
    </location>
    <ligand>
        <name>ATP</name>
        <dbReference type="ChEBI" id="CHEBI:30616"/>
    </ligand>
</feature>